<sequence>MFIDVAKIELKAGKGGDGSVAFRREKYEPSGGPAGGDGGDGGSIIIVGDKDIKTLMDYSYRSIYKAESGGDGRNKKQFGKKGEDLILKVPVGTLVKDYDTDTVIYDVKHDKEEFVICKGGKGGKGNVHFKSSIRQAPRFAEPGEKGEEKTIKLELKLLADVGLIGLPNVGKSTLLSIMSNARPKIANYHFTTLEPNLGVCKVGEKSFVLADIPGLIEGASEGLGLGHDFLKHIERTKILVHVLDISGSEGRNPIEDFELINSELSSYNIKLNDKKMLVVLNKTDLGAEDNIKEFREKYSDKVDEIVEISAATTENVDKLMYLIADTLDSIEDDYSTLDEQYVYFEEEKEPDFKVRRENENYIVEGPLIENLIYRTNFEVYESVNHLQKVLEDKGVIQQLKDLGIQDGDNVVIGDVEFDFYE</sequence>
<accession>B0S3Z4</accession>
<dbReference type="EC" id="3.6.5.-" evidence="1"/>
<dbReference type="EMBL" id="AP008971">
    <property type="protein sequence ID" value="BAG07785.1"/>
    <property type="molecule type" value="Genomic_DNA"/>
</dbReference>
<dbReference type="SMR" id="B0S3Z4"/>
<dbReference type="STRING" id="334413.FMG_0367"/>
<dbReference type="KEGG" id="fma:FMG_0367"/>
<dbReference type="eggNOG" id="COG0536">
    <property type="taxonomic scope" value="Bacteria"/>
</dbReference>
<dbReference type="HOGENOM" id="CLU_011747_2_1_9"/>
<dbReference type="Proteomes" id="UP000001319">
    <property type="component" value="Chromosome"/>
</dbReference>
<dbReference type="GO" id="GO:0005737">
    <property type="term" value="C:cytoplasm"/>
    <property type="evidence" value="ECO:0007669"/>
    <property type="project" value="UniProtKB-SubCell"/>
</dbReference>
<dbReference type="GO" id="GO:0005525">
    <property type="term" value="F:GTP binding"/>
    <property type="evidence" value="ECO:0007669"/>
    <property type="project" value="UniProtKB-UniRule"/>
</dbReference>
<dbReference type="GO" id="GO:0003924">
    <property type="term" value="F:GTPase activity"/>
    <property type="evidence" value="ECO:0007669"/>
    <property type="project" value="UniProtKB-UniRule"/>
</dbReference>
<dbReference type="GO" id="GO:0000287">
    <property type="term" value="F:magnesium ion binding"/>
    <property type="evidence" value="ECO:0007669"/>
    <property type="project" value="InterPro"/>
</dbReference>
<dbReference type="GO" id="GO:0042254">
    <property type="term" value="P:ribosome biogenesis"/>
    <property type="evidence" value="ECO:0007669"/>
    <property type="project" value="UniProtKB-UniRule"/>
</dbReference>
<dbReference type="CDD" id="cd01898">
    <property type="entry name" value="Obg"/>
    <property type="match status" value="1"/>
</dbReference>
<dbReference type="FunFam" id="2.70.210.12:FF:000001">
    <property type="entry name" value="GTPase Obg"/>
    <property type="match status" value="1"/>
</dbReference>
<dbReference type="Gene3D" id="3.30.300.350">
    <property type="entry name" value="GTP-binding protein OBG, C-terminal domain"/>
    <property type="match status" value="1"/>
</dbReference>
<dbReference type="Gene3D" id="2.70.210.12">
    <property type="entry name" value="GTP1/OBG domain"/>
    <property type="match status" value="1"/>
</dbReference>
<dbReference type="Gene3D" id="3.40.50.300">
    <property type="entry name" value="P-loop containing nucleotide triphosphate hydrolases"/>
    <property type="match status" value="1"/>
</dbReference>
<dbReference type="HAMAP" id="MF_01454">
    <property type="entry name" value="GTPase_Obg"/>
    <property type="match status" value="1"/>
</dbReference>
<dbReference type="InterPro" id="IPR031167">
    <property type="entry name" value="G_OBG"/>
</dbReference>
<dbReference type="InterPro" id="IPR006073">
    <property type="entry name" value="GTP-bd"/>
</dbReference>
<dbReference type="InterPro" id="IPR014100">
    <property type="entry name" value="GTP-bd_Obg/CgtA"/>
</dbReference>
<dbReference type="InterPro" id="IPR036346">
    <property type="entry name" value="GTP-bd_prot_GTP1/OBG_C_sf"/>
</dbReference>
<dbReference type="InterPro" id="IPR006074">
    <property type="entry name" value="GTP1-OBG_CS"/>
</dbReference>
<dbReference type="InterPro" id="IPR006169">
    <property type="entry name" value="GTP1_OBG_dom"/>
</dbReference>
<dbReference type="InterPro" id="IPR036726">
    <property type="entry name" value="GTP1_OBG_dom_sf"/>
</dbReference>
<dbReference type="InterPro" id="IPR045086">
    <property type="entry name" value="OBG_GTPase"/>
</dbReference>
<dbReference type="InterPro" id="IPR015349">
    <property type="entry name" value="OCT_dom"/>
</dbReference>
<dbReference type="InterPro" id="IPR027417">
    <property type="entry name" value="P-loop_NTPase"/>
</dbReference>
<dbReference type="InterPro" id="IPR005225">
    <property type="entry name" value="Small_GTP-bd"/>
</dbReference>
<dbReference type="NCBIfam" id="TIGR02729">
    <property type="entry name" value="Obg_CgtA"/>
    <property type="match status" value="1"/>
</dbReference>
<dbReference type="NCBIfam" id="TIGR03595">
    <property type="entry name" value="Obg_CgtA_exten"/>
    <property type="match status" value="1"/>
</dbReference>
<dbReference type="NCBIfam" id="NF008954">
    <property type="entry name" value="PRK12296.1"/>
    <property type="match status" value="1"/>
</dbReference>
<dbReference type="NCBIfam" id="NF008955">
    <property type="entry name" value="PRK12297.1"/>
    <property type="match status" value="1"/>
</dbReference>
<dbReference type="NCBIfam" id="NF008956">
    <property type="entry name" value="PRK12299.1"/>
    <property type="match status" value="1"/>
</dbReference>
<dbReference type="NCBIfam" id="TIGR00231">
    <property type="entry name" value="small_GTP"/>
    <property type="match status" value="1"/>
</dbReference>
<dbReference type="PANTHER" id="PTHR11702">
    <property type="entry name" value="DEVELOPMENTALLY REGULATED GTP-BINDING PROTEIN-RELATED"/>
    <property type="match status" value="1"/>
</dbReference>
<dbReference type="PANTHER" id="PTHR11702:SF31">
    <property type="entry name" value="MITOCHONDRIAL RIBOSOME-ASSOCIATED GTPASE 2"/>
    <property type="match status" value="1"/>
</dbReference>
<dbReference type="Pfam" id="PF09269">
    <property type="entry name" value="DUF1967"/>
    <property type="match status" value="1"/>
</dbReference>
<dbReference type="Pfam" id="PF01018">
    <property type="entry name" value="GTP1_OBG"/>
    <property type="match status" value="1"/>
</dbReference>
<dbReference type="Pfam" id="PF01926">
    <property type="entry name" value="MMR_HSR1"/>
    <property type="match status" value="1"/>
</dbReference>
<dbReference type="PRINTS" id="PR00326">
    <property type="entry name" value="GTP1OBG"/>
</dbReference>
<dbReference type="SUPFAM" id="SSF102741">
    <property type="entry name" value="Obg GTP-binding protein C-terminal domain"/>
    <property type="match status" value="1"/>
</dbReference>
<dbReference type="SUPFAM" id="SSF82051">
    <property type="entry name" value="Obg GTP-binding protein N-terminal domain"/>
    <property type="match status" value="1"/>
</dbReference>
<dbReference type="SUPFAM" id="SSF52540">
    <property type="entry name" value="P-loop containing nucleoside triphosphate hydrolases"/>
    <property type="match status" value="1"/>
</dbReference>
<dbReference type="PROSITE" id="PS51710">
    <property type="entry name" value="G_OBG"/>
    <property type="match status" value="1"/>
</dbReference>
<dbReference type="PROSITE" id="PS00905">
    <property type="entry name" value="GTP1_OBG"/>
    <property type="match status" value="1"/>
</dbReference>
<dbReference type="PROSITE" id="PS51883">
    <property type="entry name" value="OBG"/>
    <property type="match status" value="1"/>
</dbReference>
<dbReference type="PROSITE" id="PS51881">
    <property type="entry name" value="OCT"/>
    <property type="match status" value="1"/>
</dbReference>
<name>OBG_FINM2</name>
<evidence type="ECO:0000255" key="1">
    <source>
        <dbReference type="HAMAP-Rule" id="MF_01454"/>
    </source>
</evidence>
<evidence type="ECO:0000255" key="2">
    <source>
        <dbReference type="PROSITE-ProRule" id="PRU01229"/>
    </source>
</evidence>
<evidence type="ECO:0000255" key="3">
    <source>
        <dbReference type="PROSITE-ProRule" id="PRU01231"/>
    </source>
</evidence>
<evidence type="ECO:0000256" key="4">
    <source>
        <dbReference type="SAM" id="MobiDB-lite"/>
    </source>
</evidence>
<gene>
    <name evidence="1" type="primary">obg</name>
    <name type="ordered locus">FMG_0367</name>
</gene>
<protein>
    <recommendedName>
        <fullName evidence="1">GTPase Obg</fullName>
        <ecNumber evidence="1">3.6.5.-</ecNumber>
    </recommendedName>
    <alternativeName>
        <fullName evidence="1">GTP-binding protein Obg</fullName>
    </alternativeName>
</protein>
<organism>
    <name type="scientific">Finegoldia magna (strain ATCC 29328 / DSM 20472 / WAL 2508)</name>
    <name type="common">Peptostreptococcus magnus</name>
    <dbReference type="NCBI Taxonomy" id="334413"/>
    <lineage>
        <taxon>Bacteria</taxon>
        <taxon>Bacillati</taxon>
        <taxon>Bacillota</taxon>
        <taxon>Tissierellia</taxon>
        <taxon>Tissierellales</taxon>
        <taxon>Peptoniphilaceae</taxon>
        <taxon>Finegoldia</taxon>
    </lineage>
</organism>
<feature type="chain" id="PRO_0000385932" description="GTPase Obg">
    <location>
        <begin position="1"/>
        <end position="421"/>
    </location>
</feature>
<feature type="domain" description="Obg" evidence="3">
    <location>
        <begin position="1"/>
        <end position="158"/>
    </location>
</feature>
<feature type="domain" description="OBG-type G" evidence="1">
    <location>
        <begin position="159"/>
        <end position="328"/>
    </location>
</feature>
<feature type="domain" description="OCT" evidence="2">
    <location>
        <begin position="344"/>
        <end position="421"/>
    </location>
</feature>
<feature type="region of interest" description="Disordered" evidence="4">
    <location>
        <begin position="21"/>
        <end position="40"/>
    </location>
</feature>
<feature type="binding site" evidence="1">
    <location>
        <begin position="165"/>
        <end position="172"/>
    </location>
    <ligand>
        <name>GTP</name>
        <dbReference type="ChEBI" id="CHEBI:37565"/>
    </ligand>
</feature>
<feature type="binding site" evidence="1">
    <location>
        <position position="172"/>
    </location>
    <ligand>
        <name>Mg(2+)</name>
        <dbReference type="ChEBI" id="CHEBI:18420"/>
    </ligand>
</feature>
<feature type="binding site" evidence="1">
    <location>
        <begin position="190"/>
        <end position="194"/>
    </location>
    <ligand>
        <name>GTP</name>
        <dbReference type="ChEBI" id="CHEBI:37565"/>
    </ligand>
</feature>
<feature type="binding site" evidence="1">
    <location>
        <position position="192"/>
    </location>
    <ligand>
        <name>Mg(2+)</name>
        <dbReference type="ChEBI" id="CHEBI:18420"/>
    </ligand>
</feature>
<feature type="binding site" evidence="1">
    <location>
        <begin position="211"/>
        <end position="214"/>
    </location>
    <ligand>
        <name>GTP</name>
        <dbReference type="ChEBI" id="CHEBI:37565"/>
    </ligand>
</feature>
<feature type="binding site" evidence="1">
    <location>
        <begin position="281"/>
        <end position="284"/>
    </location>
    <ligand>
        <name>GTP</name>
        <dbReference type="ChEBI" id="CHEBI:37565"/>
    </ligand>
</feature>
<feature type="binding site" evidence="1">
    <location>
        <begin position="309"/>
        <end position="311"/>
    </location>
    <ligand>
        <name>GTP</name>
        <dbReference type="ChEBI" id="CHEBI:37565"/>
    </ligand>
</feature>
<reference key="1">
    <citation type="journal article" date="2008" name="DNA Res.">
        <title>Complete genome sequence of Finegoldia magna, an anaerobic opportunistic pathogen.</title>
        <authorList>
            <person name="Goto T."/>
            <person name="Yamashita A."/>
            <person name="Hirakawa H."/>
            <person name="Matsutani M."/>
            <person name="Todo K."/>
            <person name="Ohshima K."/>
            <person name="Toh H."/>
            <person name="Miyamoto K."/>
            <person name="Kuhara S."/>
            <person name="Hattori M."/>
            <person name="Shimizu T."/>
            <person name="Akimoto S."/>
        </authorList>
    </citation>
    <scope>NUCLEOTIDE SEQUENCE [LARGE SCALE GENOMIC DNA]</scope>
    <source>
        <strain>ATCC 29328 / DSM 20472 / WAL 2508</strain>
    </source>
</reference>
<comment type="function">
    <text evidence="1">An essential GTPase which binds GTP, GDP and possibly (p)ppGpp with moderate affinity, with high nucleotide exchange rates and a fairly low GTP hydrolysis rate. Plays a role in control of the cell cycle, stress response, ribosome biogenesis and in those bacteria that undergo differentiation, in morphogenesis control.</text>
</comment>
<comment type="cofactor">
    <cofactor evidence="1">
        <name>Mg(2+)</name>
        <dbReference type="ChEBI" id="CHEBI:18420"/>
    </cofactor>
</comment>
<comment type="subunit">
    <text evidence="1">Monomer.</text>
</comment>
<comment type="subcellular location">
    <subcellularLocation>
        <location evidence="1">Cytoplasm</location>
    </subcellularLocation>
</comment>
<comment type="similarity">
    <text evidence="1">Belongs to the TRAFAC class OBG-HflX-like GTPase superfamily. OBG GTPase family.</text>
</comment>
<keyword id="KW-0963">Cytoplasm</keyword>
<keyword id="KW-0342">GTP-binding</keyword>
<keyword id="KW-0378">Hydrolase</keyword>
<keyword id="KW-0460">Magnesium</keyword>
<keyword id="KW-0479">Metal-binding</keyword>
<keyword id="KW-0547">Nucleotide-binding</keyword>
<keyword id="KW-1185">Reference proteome</keyword>
<proteinExistence type="inferred from homology"/>